<evidence type="ECO:0000250" key="1"/>
<evidence type="ECO:0000256" key="2">
    <source>
        <dbReference type="SAM" id="MobiDB-lite"/>
    </source>
</evidence>
<evidence type="ECO:0000305" key="3"/>
<reference key="1">
    <citation type="journal article" date="1988" name="Mol. Cell. Biol.">
        <title>The Drosophila melanogaster tropomyosin II gene produces multiple proteins by use of alternative tissue-specific promoters and alternative splicing.</title>
        <authorList>
            <person name="Hanke P.D."/>
            <person name="Storti R.V."/>
        </authorList>
    </citation>
    <scope>NUCLEOTIDE SEQUENCE [GENOMIC DNA]</scope>
    <scope>ALTERNATIVE SPLICING</scope>
    <source>
        <tissue>Embryo</tissue>
        <tissue>Pupae</tissue>
    </source>
</reference>
<reference key="2">
    <citation type="journal article" date="1986" name="Mol. Cell. Biol.">
        <title>Two Drosophila melanogaster tropomyosin genes: structural and functional aspects.</title>
        <authorList>
            <person name="Karlik C.C."/>
            <person name="Fyrberg E.A."/>
        </authorList>
    </citation>
    <scope>NUCLEOTIDE SEQUENCE [GENOMIC DNA]</scope>
    <scope>ALTERNATIVE SPLICING</scope>
    <source>
        <strain>Oregon-R</strain>
        <tissue>Pupae</tissue>
    </source>
</reference>
<reference key="3">
    <citation type="journal article" date="2000" name="Science">
        <title>The genome sequence of Drosophila melanogaster.</title>
        <authorList>
            <person name="Adams M.D."/>
            <person name="Celniker S.E."/>
            <person name="Holt R.A."/>
            <person name="Evans C.A."/>
            <person name="Gocayne J.D."/>
            <person name="Amanatides P.G."/>
            <person name="Scherer S.E."/>
            <person name="Li P.W."/>
            <person name="Hoskins R.A."/>
            <person name="Galle R.F."/>
            <person name="George R.A."/>
            <person name="Lewis S.E."/>
            <person name="Richards S."/>
            <person name="Ashburner M."/>
            <person name="Henderson S.N."/>
            <person name="Sutton G.G."/>
            <person name="Wortman J.R."/>
            <person name="Yandell M.D."/>
            <person name="Zhang Q."/>
            <person name="Chen L.X."/>
            <person name="Brandon R.C."/>
            <person name="Rogers Y.-H.C."/>
            <person name="Blazej R.G."/>
            <person name="Champe M."/>
            <person name="Pfeiffer B.D."/>
            <person name="Wan K.H."/>
            <person name="Doyle C."/>
            <person name="Baxter E.G."/>
            <person name="Helt G."/>
            <person name="Nelson C.R."/>
            <person name="Miklos G.L.G."/>
            <person name="Abril J.F."/>
            <person name="Agbayani A."/>
            <person name="An H.-J."/>
            <person name="Andrews-Pfannkoch C."/>
            <person name="Baldwin D."/>
            <person name="Ballew R.M."/>
            <person name="Basu A."/>
            <person name="Baxendale J."/>
            <person name="Bayraktaroglu L."/>
            <person name="Beasley E.M."/>
            <person name="Beeson K.Y."/>
            <person name="Benos P.V."/>
            <person name="Berman B.P."/>
            <person name="Bhandari D."/>
            <person name="Bolshakov S."/>
            <person name="Borkova D."/>
            <person name="Botchan M.R."/>
            <person name="Bouck J."/>
            <person name="Brokstein P."/>
            <person name="Brottier P."/>
            <person name="Burtis K.C."/>
            <person name="Busam D.A."/>
            <person name="Butler H."/>
            <person name="Cadieu E."/>
            <person name="Center A."/>
            <person name="Chandra I."/>
            <person name="Cherry J.M."/>
            <person name="Cawley S."/>
            <person name="Dahlke C."/>
            <person name="Davenport L.B."/>
            <person name="Davies P."/>
            <person name="de Pablos B."/>
            <person name="Delcher A."/>
            <person name="Deng Z."/>
            <person name="Mays A.D."/>
            <person name="Dew I."/>
            <person name="Dietz S.M."/>
            <person name="Dodson K."/>
            <person name="Doup L.E."/>
            <person name="Downes M."/>
            <person name="Dugan-Rocha S."/>
            <person name="Dunkov B.C."/>
            <person name="Dunn P."/>
            <person name="Durbin K.J."/>
            <person name="Evangelista C.C."/>
            <person name="Ferraz C."/>
            <person name="Ferriera S."/>
            <person name="Fleischmann W."/>
            <person name="Fosler C."/>
            <person name="Gabrielian A.E."/>
            <person name="Garg N.S."/>
            <person name="Gelbart W.M."/>
            <person name="Glasser K."/>
            <person name="Glodek A."/>
            <person name="Gong F."/>
            <person name="Gorrell J.H."/>
            <person name="Gu Z."/>
            <person name="Guan P."/>
            <person name="Harris M."/>
            <person name="Harris N.L."/>
            <person name="Harvey D.A."/>
            <person name="Heiman T.J."/>
            <person name="Hernandez J.R."/>
            <person name="Houck J."/>
            <person name="Hostin D."/>
            <person name="Houston K.A."/>
            <person name="Howland T.J."/>
            <person name="Wei M.-H."/>
            <person name="Ibegwam C."/>
            <person name="Jalali M."/>
            <person name="Kalush F."/>
            <person name="Karpen G.H."/>
            <person name="Ke Z."/>
            <person name="Kennison J.A."/>
            <person name="Ketchum K.A."/>
            <person name="Kimmel B.E."/>
            <person name="Kodira C.D."/>
            <person name="Kraft C.L."/>
            <person name="Kravitz S."/>
            <person name="Kulp D."/>
            <person name="Lai Z."/>
            <person name="Lasko P."/>
            <person name="Lei Y."/>
            <person name="Levitsky A.A."/>
            <person name="Li J.H."/>
            <person name="Li Z."/>
            <person name="Liang Y."/>
            <person name="Lin X."/>
            <person name="Liu X."/>
            <person name="Mattei B."/>
            <person name="McIntosh T.C."/>
            <person name="McLeod M.P."/>
            <person name="McPherson D."/>
            <person name="Merkulov G."/>
            <person name="Milshina N.V."/>
            <person name="Mobarry C."/>
            <person name="Morris J."/>
            <person name="Moshrefi A."/>
            <person name="Mount S.M."/>
            <person name="Moy M."/>
            <person name="Murphy B."/>
            <person name="Murphy L."/>
            <person name="Muzny D.M."/>
            <person name="Nelson D.L."/>
            <person name="Nelson D.R."/>
            <person name="Nelson K.A."/>
            <person name="Nixon K."/>
            <person name="Nusskern D.R."/>
            <person name="Pacleb J.M."/>
            <person name="Palazzolo M."/>
            <person name="Pittman G.S."/>
            <person name="Pan S."/>
            <person name="Pollard J."/>
            <person name="Puri V."/>
            <person name="Reese M.G."/>
            <person name="Reinert K."/>
            <person name="Remington K."/>
            <person name="Saunders R.D.C."/>
            <person name="Scheeler F."/>
            <person name="Shen H."/>
            <person name="Shue B.C."/>
            <person name="Siden-Kiamos I."/>
            <person name="Simpson M."/>
            <person name="Skupski M.P."/>
            <person name="Smith T.J."/>
            <person name="Spier E."/>
            <person name="Spradling A.C."/>
            <person name="Stapleton M."/>
            <person name="Strong R."/>
            <person name="Sun E."/>
            <person name="Svirskas R."/>
            <person name="Tector C."/>
            <person name="Turner R."/>
            <person name="Venter E."/>
            <person name="Wang A.H."/>
            <person name="Wang X."/>
            <person name="Wang Z.-Y."/>
            <person name="Wassarman D.A."/>
            <person name="Weinstock G.M."/>
            <person name="Weissenbach J."/>
            <person name="Williams S.M."/>
            <person name="Woodage T."/>
            <person name="Worley K.C."/>
            <person name="Wu D."/>
            <person name="Yang S."/>
            <person name="Yao Q.A."/>
            <person name="Ye J."/>
            <person name="Yeh R.-F."/>
            <person name="Zaveri J.S."/>
            <person name="Zhan M."/>
            <person name="Zhang G."/>
            <person name="Zhao Q."/>
            <person name="Zheng L."/>
            <person name="Zheng X.H."/>
            <person name="Zhong F.N."/>
            <person name="Zhong W."/>
            <person name="Zhou X."/>
            <person name="Zhu S.C."/>
            <person name="Zhu X."/>
            <person name="Smith H.O."/>
            <person name="Gibbs R.A."/>
            <person name="Myers E.W."/>
            <person name="Rubin G.M."/>
            <person name="Venter J.C."/>
        </authorList>
    </citation>
    <scope>NUCLEOTIDE SEQUENCE [LARGE SCALE GENOMIC DNA]</scope>
    <source>
        <strain>Berkeley</strain>
    </source>
</reference>
<reference key="4">
    <citation type="journal article" date="2002" name="Genome Biol.">
        <title>Annotation of the Drosophila melanogaster euchromatic genome: a systematic review.</title>
        <authorList>
            <person name="Misra S."/>
            <person name="Crosby M.A."/>
            <person name="Mungall C.J."/>
            <person name="Matthews B.B."/>
            <person name="Campbell K.S."/>
            <person name="Hradecky P."/>
            <person name="Huang Y."/>
            <person name="Kaminker J.S."/>
            <person name="Millburn G.H."/>
            <person name="Prochnik S.E."/>
            <person name="Smith C.D."/>
            <person name="Tupy J.L."/>
            <person name="Whitfield E.J."/>
            <person name="Bayraktaroglu L."/>
            <person name="Berman B.P."/>
            <person name="Bettencourt B.R."/>
            <person name="Celniker S.E."/>
            <person name="de Grey A.D.N.J."/>
            <person name="Drysdale R.A."/>
            <person name="Harris N.L."/>
            <person name="Richter J."/>
            <person name="Russo S."/>
            <person name="Schroeder A.J."/>
            <person name="Shu S.Q."/>
            <person name="Stapleton M."/>
            <person name="Yamada C."/>
            <person name="Ashburner M."/>
            <person name="Gelbart W.M."/>
            <person name="Rubin G.M."/>
            <person name="Lewis S.E."/>
        </authorList>
    </citation>
    <scope>GENOME REANNOTATION</scope>
    <scope>ALTERNATIVE SPLICING</scope>
    <source>
        <strain>Berkeley</strain>
    </source>
</reference>
<sequence>MDAIKKKMQAMKVDKDGALERALVCEQEARDANTRAEKAEEEARQLQKKIQTVENELDQTQEALTLVTGKLEEKNKALQNAESEVAALNRRIQLLEEDLERSEERLGSATAKLSEASQAADESERARKILENRALADEERMDALENQLKEARFLAEEADKKYDEVARKLAMVEADLERAEERAEQGENKIVELEEELRVVGNNLKSLEVSEEKANQREEEYKNQIKTLNTRLKEAEARAEFAERSVQKLQKEVDRLEDDLIVEKERYCMIGDSLDEAFVDLIKGLEPFWNPRNPKPPTPKLPTPTPEELAAMEEARAAAEAAAAAEAEAAEAAAAAGEAGPDGAPAAPGEEKAPAKEPTPPKEPTPPPPPPPPFEYSIDLPPEGAEVPYVKNYEPPPPGSEPEPVPAAEGEAAPAAEGAAPPAEGAAPPAEGAVPPADGAAPPAEGAAPAAEGAAPPADGAAPPAEAAAAPADAAAPAAEAAPAEAPAAEATAAEAPPAEAAPAEAAPAAAEGEAPPA</sequence>
<dbReference type="EMBL" id="X76208">
    <property type="protein sequence ID" value="CAA53800.1"/>
    <property type="molecule type" value="Genomic_DNA"/>
</dbReference>
<dbReference type="EMBL" id="X76208">
    <property type="protein sequence ID" value="CAA53801.1"/>
    <property type="molecule type" value="Genomic_DNA"/>
</dbReference>
<dbReference type="EMBL" id="K02620">
    <property type="protein sequence ID" value="AAA28967.1"/>
    <property type="status" value="ALT_SEQ"/>
    <property type="molecule type" value="Genomic_DNA"/>
</dbReference>
<dbReference type="EMBL" id="L00355">
    <property type="protein sequence ID" value="AAA28967.1"/>
    <property type="status" value="JOINED"/>
    <property type="molecule type" value="Genomic_DNA"/>
</dbReference>
<dbReference type="EMBL" id="L00356">
    <property type="protein sequence ID" value="AAA28967.1"/>
    <property type="status" value="JOINED"/>
    <property type="molecule type" value="Genomic_DNA"/>
</dbReference>
<dbReference type="EMBL" id="L00357">
    <property type="protein sequence ID" value="AAA28967.1"/>
    <property type="status" value="JOINED"/>
    <property type="molecule type" value="Genomic_DNA"/>
</dbReference>
<dbReference type="EMBL" id="L00358">
    <property type="protein sequence ID" value="AAA28967.1"/>
    <property type="status" value="JOINED"/>
    <property type="molecule type" value="Genomic_DNA"/>
</dbReference>
<dbReference type="EMBL" id="L00359">
    <property type="protein sequence ID" value="AAA28967.1"/>
    <property type="status" value="JOINED"/>
    <property type="molecule type" value="Genomic_DNA"/>
</dbReference>
<dbReference type="EMBL" id="L00360">
    <property type="protein sequence ID" value="AAA28967.1"/>
    <property type="status" value="JOINED"/>
    <property type="molecule type" value="Genomic_DNA"/>
</dbReference>
<dbReference type="EMBL" id="L00362">
    <property type="protein sequence ID" value="AAA28967.1"/>
    <property type="status" value="JOINED"/>
    <property type="molecule type" value="Genomic_DNA"/>
</dbReference>
<dbReference type="EMBL" id="M12840">
    <property type="protein sequence ID" value="AAA28967.1"/>
    <property type="status" value="JOINED"/>
    <property type="molecule type" value="Genomic_DNA"/>
</dbReference>
<dbReference type="EMBL" id="K02621">
    <property type="protein sequence ID" value="AAA28968.1"/>
    <property type="molecule type" value="Genomic_DNA"/>
</dbReference>
<dbReference type="EMBL" id="M12840">
    <property type="protein sequence ID" value="AAA28968.1"/>
    <property type="status" value="JOINED"/>
    <property type="molecule type" value="Genomic_DNA"/>
</dbReference>
<dbReference type="EMBL" id="L00355">
    <property type="protein sequence ID" value="AAA28968.1"/>
    <property type="status" value="JOINED"/>
    <property type="molecule type" value="Genomic_DNA"/>
</dbReference>
<dbReference type="EMBL" id="L00356">
    <property type="protein sequence ID" value="AAA28968.1"/>
    <property type="status" value="JOINED"/>
    <property type="molecule type" value="Genomic_DNA"/>
</dbReference>
<dbReference type="EMBL" id="L00357">
    <property type="protein sequence ID" value="AAA28968.1"/>
    <property type="status" value="JOINED"/>
    <property type="molecule type" value="Genomic_DNA"/>
</dbReference>
<dbReference type="EMBL" id="L00358">
    <property type="protein sequence ID" value="AAA28968.1"/>
    <property type="status" value="JOINED"/>
    <property type="molecule type" value="Genomic_DNA"/>
</dbReference>
<dbReference type="EMBL" id="L00359">
    <property type="protein sequence ID" value="AAA28968.1"/>
    <property type="status" value="JOINED"/>
    <property type="molecule type" value="Genomic_DNA"/>
</dbReference>
<dbReference type="EMBL" id="L00360">
    <property type="protein sequence ID" value="AAA28968.1"/>
    <property type="status" value="JOINED"/>
    <property type="molecule type" value="Genomic_DNA"/>
</dbReference>
<dbReference type="EMBL" id="L00362">
    <property type="protein sequence ID" value="AAA28968.1"/>
    <property type="status" value="JOINED"/>
    <property type="molecule type" value="Genomic_DNA"/>
</dbReference>
<dbReference type="EMBL" id="AE014297">
    <property type="protein sequence ID" value="AAN13647.2"/>
    <property type="molecule type" value="Genomic_DNA"/>
</dbReference>
<dbReference type="EMBL" id="AE014297">
    <property type="protein sequence ID" value="AAS65155.1"/>
    <property type="molecule type" value="Genomic_DNA"/>
</dbReference>
<dbReference type="PIR" id="B25242">
    <property type="entry name" value="B25242"/>
</dbReference>
<dbReference type="RefSeq" id="NP_732005.2">
    <molecule id="P49455-2"/>
    <property type="nucleotide sequence ID" value="NM_169637.4"/>
</dbReference>
<dbReference type="RefSeq" id="NP_996217.1">
    <molecule id="P49455-1"/>
    <property type="nucleotide sequence ID" value="NM_206495.2"/>
</dbReference>
<dbReference type="SMR" id="P49455"/>
<dbReference type="BioGRID" id="66916">
    <property type="interactions" value="51"/>
</dbReference>
<dbReference type="FunCoup" id="P49455">
    <property type="interactions" value="37"/>
</dbReference>
<dbReference type="IntAct" id="P49455">
    <property type="interactions" value="25"/>
</dbReference>
<dbReference type="Allergome" id="1517">
    <property type="allergen name" value="Dro m 7"/>
</dbReference>
<dbReference type="Allergome" id="4081">
    <property type="allergen name" value="Dro m 7.0103"/>
</dbReference>
<dbReference type="GlyGen" id="P49455">
    <property type="glycosylation" value="3 sites"/>
</dbReference>
<dbReference type="DNASU" id="41852"/>
<dbReference type="EnsemblMetazoa" id="FBtr0089957">
    <molecule id="P49455-1"/>
    <property type="protein sequence ID" value="FBpp0088896"/>
    <property type="gene ID" value="FBgn0003721"/>
</dbReference>
<dbReference type="EnsemblMetazoa" id="FBtr0089959">
    <molecule id="P49455-2"/>
    <property type="protein sequence ID" value="FBpp0088898"/>
    <property type="gene ID" value="FBgn0003721"/>
</dbReference>
<dbReference type="GeneID" id="41852"/>
<dbReference type="KEGG" id="dme:Dmel_CG4898"/>
<dbReference type="AGR" id="FB:FBgn0003721"/>
<dbReference type="CTD" id="41852"/>
<dbReference type="FlyBase" id="FBgn0003721">
    <property type="gene designation" value="Tm1"/>
</dbReference>
<dbReference type="VEuPathDB" id="VectorBase:FBgn0003721"/>
<dbReference type="GeneTree" id="ENSGT01030000234542"/>
<dbReference type="HOGENOM" id="CLU_604422_0_0_1"/>
<dbReference type="InParanoid" id="P49455"/>
<dbReference type="OrthoDB" id="128924at2759"/>
<dbReference type="PhylomeDB" id="P49455"/>
<dbReference type="Reactome" id="R-DME-445355">
    <property type="pathway name" value="Smooth Muscle Contraction"/>
</dbReference>
<dbReference type="Reactome" id="R-DME-9013424">
    <property type="pathway name" value="RHOV GTPase cycle"/>
</dbReference>
<dbReference type="SignaLink" id="P49455"/>
<dbReference type="BioGRID-ORCS" id="41852">
    <property type="hits" value="0 hits in 3 CRISPR screens"/>
</dbReference>
<dbReference type="GenomeRNAi" id="41852"/>
<dbReference type="Proteomes" id="UP000000803">
    <property type="component" value="Chromosome 3R"/>
</dbReference>
<dbReference type="Bgee" id="FBgn0003721">
    <property type="expression patterns" value="Expressed in crop (Drosophila) and 323 other cell types or tissues"/>
</dbReference>
<dbReference type="ExpressionAtlas" id="P49455">
    <property type="expression patterns" value="baseline and differential"/>
</dbReference>
<dbReference type="GO" id="GO:0005884">
    <property type="term" value="C:actin filament"/>
    <property type="evidence" value="ECO:0000318"/>
    <property type="project" value="GO_Central"/>
</dbReference>
<dbReference type="GO" id="GO:0005829">
    <property type="term" value="C:cytosol"/>
    <property type="evidence" value="ECO:0007005"/>
    <property type="project" value="FlyBase"/>
</dbReference>
<dbReference type="GO" id="GO:0070865">
    <property type="term" value="C:investment cone"/>
    <property type="evidence" value="ECO:0000314"/>
    <property type="project" value="FlyBase"/>
</dbReference>
<dbReference type="GO" id="GO:0043186">
    <property type="term" value="C:P granule"/>
    <property type="evidence" value="ECO:0000314"/>
    <property type="project" value="FlyBase"/>
</dbReference>
<dbReference type="GO" id="GO:0030017">
    <property type="term" value="C:sarcomere"/>
    <property type="evidence" value="ECO:0000314"/>
    <property type="project" value="FlyBase"/>
</dbReference>
<dbReference type="GO" id="GO:0003779">
    <property type="term" value="F:actin binding"/>
    <property type="evidence" value="ECO:0000304"/>
    <property type="project" value="FlyBase"/>
</dbReference>
<dbReference type="GO" id="GO:0051015">
    <property type="term" value="F:actin filament binding"/>
    <property type="evidence" value="ECO:0000314"/>
    <property type="project" value="FlyBase"/>
</dbReference>
<dbReference type="GO" id="GO:0019894">
    <property type="term" value="F:kinesin binding"/>
    <property type="evidence" value="ECO:0000353"/>
    <property type="project" value="FlyBase"/>
</dbReference>
<dbReference type="GO" id="GO:0007015">
    <property type="term" value="P:actin filament organization"/>
    <property type="evidence" value="ECO:0000318"/>
    <property type="project" value="GO_Central"/>
</dbReference>
<dbReference type="GO" id="GO:0048813">
    <property type="term" value="P:dendrite morphogenesis"/>
    <property type="evidence" value="ECO:0000315"/>
    <property type="project" value="FlyBase"/>
</dbReference>
<dbReference type="GO" id="GO:0006936">
    <property type="term" value="P:muscle contraction"/>
    <property type="evidence" value="ECO:0000318"/>
    <property type="project" value="GO_Central"/>
</dbReference>
<dbReference type="GO" id="GO:0048477">
    <property type="term" value="P:oogenesis"/>
    <property type="evidence" value="ECO:0000304"/>
    <property type="project" value="FlyBase"/>
</dbReference>
<dbReference type="GO" id="GO:0007315">
    <property type="term" value="P:pole plasm assembly"/>
    <property type="evidence" value="ECO:0000303"/>
    <property type="project" value="FlyBase"/>
</dbReference>
<dbReference type="GO" id="GO:0045451">
    <property type="term" value="P:pole plasm oskar mRNA localization"/>
    <property type="evidence" value="ECO:0000315"/>
    <property type="project" value="FlyBase"/>
</dbReference>
<dbReference type="GO" id="GO:0010591">
    <property type="term" value="P:regulation of lamellipodium assembly"/>
    <property type="evidence" value="ECO:0000315"/>
    <property type="project" value="FlyBase"/>
</dbReference>
<dbReference type="GO" id="GO:0055093">
    <property type="term" value="P:response to hyperoxia"/>
    <property type="evidence" value="ECO:0000315"/>
    <property type="project" value="FlyBase"/>
</dbReference>
<dbReference type="GO" id="GO:0043149">
    <property type="term" value="P:stress fiber assembly"/>
    <property type="evidence" value="ECO:0000315"/>
    <property type="project" value="FlyBase"/>
</dbReference>
<dbReference type="FunFam" id="1.20.5.170:FF:000005">
    <property type="entry name" value="Tropomyosin alpha-1 chain"/>
    <property type="match status" value="1"/>
</dbReference>
<dbReference type="FunFam" id="1.20.5.170:FF:000001">
    <property type="entry name" value="Tropomyosin alpha-1 chain isoform 1"/>
    <property type="match status" value="1"/>
</dbReference>
<dbReference type="FunFam" id="1.20.5.340:FF:000001">
    <property type="entry name" value="Tropomyosin alpha-1 chain isoform 2"/>
    <property type="match status" value="1"/>
</dbReference>
<dbReference type="Gene3D" id="1.20.5.170">
    <property type="match status" value="2"/>
</dbReference>
<dbReference type="Gene3D" id="1.20.5.340">
    <property type="match status" value="1"/>
</dbReference>
<dbReference type="InterPro" id="IPR000533">
    <property type="entry name" value="Tropomyosin"/>
</dbReference>
<dbReference type="PANTHER" id="PTHR19269">
    <property type="entry name" value="TROPOMYOSIN"/>
    <property type="match status" value="1"/>
</dbReference>
<dbReference type="Pfam" id="PF00261">
    <property type="entry name" value="Tropomyosin"/>
    <property type="match status" value="1"/>
</dbReference>
<dbReference type="PRINTS" id="PR00194">
    <property type="entry name" value="TROPOMYOSIN"/>
</dbReference>
<dbReference type="SUPFAM" id="SSF57997">
    <property type="entry name" value="Tropomyosin"/>
    <property type="match status" value="1"/>
</dbReference>
<dbReference type="PROSITE" id="PS00326">
    <property type="entry name" value="TROPOMYOSIN"/>
    <property type="match status" value="1"/>
</dbReference>
<accession>P49455</accession>
<accession>P49456</accession>
<accession>Q24425</accession>
<accession>Q24426</accession>
<accession>Q7KSH9</accession>
<accession>Q7KSI0</accession>
<feature type="chain" id="PRO_0000205685" description="Tropomyosin-1, isoforms 33/34">
    <location>
        <begin position="1"/>
        <end position="518"/>
    </location>
</feature>
<feature type="region of interest" description="Disordered" evidence="2">
    <location>
        <begin position="101"/>
        <end position="125"/>
    </location>
</feature>
<feature type="region of interest" description="Disordered" evidence="2">
    <location>
        <begin position="288"/>
        <end position="518"/>
    </location>
</feature>
<feature type="coiled-coil region" evidence="1">
    <location>
        <begin position="14"/>
        <end position="267"/>
    </location>
</feature>
<feature type="compositionally biased region" description="Pro residues" evidence="2">
    <location>
        <begin position="293"/>
        <end position="305"/>
    </location>
</feature>
<feature type="compositionally biased region" description="Low complexity" evidence="2">
    <location>
        <begin position="318"/>
        <end position="348"/>
    </location>
</feature>
<feature type="compositionally biased region" description="Pro residues" evidence="2">
    <location>
        <begin position="357"/>
        <end position="374"/>
    </location>
</feature>
<feature type="compositionally biased region" description="Pro residues" evidence="2">
    <location>
        <begin position="394"/>
        <end position="405"/>
    </location>
</feature>
<feature type="compositionally biased region" description="Low complexity" evidence="2">
    <location>
        <begin position="406"/>
        <end position="518"/>
    </location>
</feature>
<feature type="splice variant" id="VSP_006623" description="In isoform 34." evidence="3">
    <original>DLIVEKERYCMIGDSLDEAFVDLIKGLEPFWNPRN</original>
    <variation>EMIKEIEHYALVGDQLDWTFVEMMGMPPFYNERY</variation>
    <location>
        <begin position="259"/>
        <end position="293"/>
    </location>
</feature>
<feature type="splice variant" id="VSP_006624" description="In isoform 34." evidence="3">
    <original>KLPTPTPEELAAMEEARAAAEAAAAAEAEAAEAAAAAGEAGPDGAPAAPGEEKAPAKEPTPPKEPTPP</original>
    <variation>ELTEEEKAALEAAAIAEAEAKARAEELAALGEEAGAEAGEGGAPAEGAAPGEPGAATEPGVEAPPAEPERIPT</variation>
    <location>
        <begin position="300"/>
        <end position="367"/>
    </location>
</feature>
<feature type="splice variant" id="VSP_006625" description="In isoform 34." evidence="3">
    <original>KNYEPPPPGSEPEPVPAAEGEAAPAAEGAAPPAEGAAPPAEGAVPPADGAAPPAEGAAPAAEGAAPPADGAAPPAEAAAAPADAAAPAAEAAPAEAPAAEATAAEAPPAEAAPAEAAPAAAEGEAPPA</original>
    <variation>RNAEPGDFAPPAEAAPAEGAPPAEGAPAAEGAAPAEGAPAAEGAPPAEGAPAPAPAEGEAAPPAPAAEGDAAAAPPPPPAEGEAAPAPAEGEAPPAEAAPAAEAPPA</variation>
    <location>
        <begin position="391"/>
        <end position="518"/>
    </location>
</feature>
<feature type="sequence conflict" description="In Ref. 2; AAA28967." evidence="3" ref="2">
    <original>LGSATAKLS</original>
    <variation>SASAIQLAA</variation>
    <location>
        <begin position="106"/>
        <end position="114"/>
    </location>
</feature>
<feature type="sequence conflict" description="In Ref. 2; AAA28967/AAA28968." evidence="3" ref="2">
    <original>A</original>
    <variation>S</variation>
    <location>
        <position position="119"/>
    </location>
</feature>
<feature type="sequence conflict" description="In Ref. 2." evidence="3" ref="2">
    <original>A</original>
    <variation>AMVEADLERAEERA</variation>
    <location>
        <position position="183"/>
    </location>
</feature>
<feature type="sequence conflict" description="In Ref. 2; AAA28967/AAA28968." evidence="3" ref="2">
    <original>V</original>
    <variation>L</variation>
    <location>
        <position position="199"/>
    </location>
</feature>
<feature type="sequence conflict" description="In Ref. 2; AAA28967." evidence="3" ref="2">
    <original>TP</original>
    <variation>A</variation>
    <location>
        <begin position="298"/>
        <end position="299"/>
    </location>
</feature>
<feature type="sequence conflict" description="In Ref. 1; CAA53800 and 2; AAA28968." evidence="3" ref="1 2">
    <original>P</original>
    <variation>A</variation>
    <location>
        <position position="341"/>
    </location>
</feature>
<feature type="sequence conflict" description="In Ref. 2; AAA28968." evidence="3" ref="2">
    <original>P</original>
    <variation>A</variation>
    <location>
        <position position="503"/>
    </location>
</feature>
<comment type="function">
    <text>Tropomyosin, in association with the troponin complex, plays a central role in the calcium dependent regulation of muscle contraction.</text>
</comment>
<comment type="subunit">
    <text evidence="1">Homodimer.</text>
</comment>
<comment type="subcellular location">
    <subcellularLocation>
        <location>Cytoplasm</location>
        <location>Cytoskeleton</location>
    </subcellularLocation>
</comment>
<comment type="alternative products">
    <event type="alternative splicing"/>
    <isoform>
        <id>P49455-1</id>
        <name>33</name>
        <name>9C</name>
        <name>K</name>
        <sequence type="displayed"/>
    </isoform>
    <isoform>
        <id>P49455-2</id>
        <name>34</name>
        <name>9B</name>
        <name>F</name>
        <sequence type="described" ref="VSP_006623 VSP_006624 VSP_006625"/>
    </isoform>
    <isoform>
        <id>P06754-3</id>
        <name>9A</name>
        <sequence type="external"/>
    </isoform>
    <isoform>
        <id>P06754-2</id>
        <name>A</name>
        <name>Cytoskeletal</name>
        <name>Non-muscle</name>
        <sequence type="external"/>
    </isoform>
    <isoform>
        <id>P06754-4</id>
        <name>B</name>
        <sequence type="external"/>
    </isoform>
    <isoform>
        <id>P06754-1</id>
        <name>D</name>
        <name>9D</name>
        <name>G</name>
        <name>J</name>
        <name>Muscle</name>
        <sequence type="external"/>
    </isoform>
    <isoform>
        <id>P06754-5</id>
        <name>L</name>
        <sequence type="external"/>
    </isoform>
    <text>Additional isoforms seem to exist.</text>
</comment>
<comment type="tissue specificity">
    <text>Both isoforms are only expressed in indirect flight muscles.</text>
</comment>
<comment type="developmental stage">
    <text>Both isoforms are expressed during pupal and adult stages.</text>
</comment>
<comment type="domain">
    <text>The molecule is in a coiled coil structure that is formed by 2 polypeptide chains. The sequence exhibits a prominent seven-residues periodicity.</text>
</comment>
<comment type="similarity">
    <text evidence="3">Belongs to the tropomyosin family.</text>
</comment>
<proteinExistence type="evidence at transcript level"/>
<keyword id="KW-0009">Actin-binding</keyword>
<keyword id="KW-0025">Alternative splicing</keyword>
<keyword id="KW-0175">Coiled coil</keyword>
<keyword id="KW-0963">Cytoplasm</keyword>
<keyword id="KW-0206">Cytoskeleton</keyword>
<keyword id="KW-0514">Muscle protein</keyword>
<keyword id="KW-1185">Reference proteome</keyword>
<name>TPM4_DROME</name>
<organism>
    <name type="scientific">Drosophila melanogaster</name>
    <name type="common">Fruit fly</name>
    <dbReference type="NCBI Taxonomy" id="7227"/>
    <lineage>
        <taxon>Eukaryota</taxon>
        <taxon>Metazoa</taxon>
        <taxon>Ecdysozoa</taxon>
        <taxon>Arthropoda</taxon>
        <taxon>Hexapoda</taxon>
        <taxon>Insecta</taxon>
        <taxon>Pterygota</taxon>
        <taxon>Neoptera</taxon>
        <taxon>Endopterygota</taxon>
        <taxon>Diptera</taxon>
        <taxon>Brachycera</taxon>
        <taxon>Muscomorpha</taxon>
        <taxon>Ephydroidea</taxon>
        <taxon>Drosophilidae</taxon>
        <taxon>Drosophila</taxon>
        <taxon>Sophophora</taxon>
    </lineage>
</organism>
<gene>
    <name type="primary">Tm1</name>
    <name type="synonym">TmII</name>
    <name type="ORF">CG4898</name>
</gene>
<protein>
    <recommendedName>
        <fullName>Tropomyosin-1, isoforms 33/34</fullName>
    </recommendedName>
    <alternativeName>
        <fullName>Tropomyosin II</fullName>
    </alternativeName>
</protein>